<proteinExistence type="inferred from homology"/>
<name>MAP22_TALSN</name>
<dbReference type="EC" id="3.4.11.18" evidence="1"/>
<dbReference type="EMBL" id="EQ962655">
    <property type="protein sequence ID" value="EED17385.1"/>
    <property type="molecule type" value="Genomic_DNA"/>
</dbReference>
<dbReference type="RefSeq" id="XP_002481377.1">
    <property type="nucleotide sequence ID" value="XM_002481332.1"/>
</dbReference>
<dbReference type="SMR" id="B8M990"/>
<dbReference type="FunCoup" id="B8M990">
    <property type="interactions" value="1183"/>
</dbReference>
<dbReference type="STRING" id="441959.B8M990"/>
<dbReference type="GeneID" id="8098873"/>
<dbReference type="VEuPathDB" id="FungiDB:TSTA_112180"/>
<dbReference type="eggNOG" id="KOG2775">
    <property type="taxonomic scope" value="Eukaryota"/>
</dbReference>
<dbReference type="HOGENOM" id="CLU_015857_7_1_1"/>
<dbReference type="InParanoid" id="B8M990"/>
<dbReference type="OMA" id="ILRYHIH"/>
<dbReference type="OrthoDB" id="7848262at2759"/>
<dbReference type="PhylomeDB" id="B8M990"/>
<dbReference type="Proteomes" id="UP000001745">
    <property type="component" value="Unassembled WGS sequence"/>
</dbReference>
<dbReference type="GO" id="GO:0005737">
    <property type="term" value="C:cytoplasm"/>
    <property type="evidence" value="ECO:0007669"/>
    <property type="project" value="UniProtKB-SubCell"/>
</dbReference>
<dbReference type="GO" id="GO:0004239">
    <property type="term" value="F:initiator methionyl aminopeptidase activity"/>
    <property type="evidence" value="ECO:0007669"/>
    <property type="project" value="UniProtKB-UniRule"/>
</dbReference>
<dbReference type="GO" id="GO:0046872">
    <property type="term" value="F:metal ion binding"/>
    <property type="evidence" value="ECO:0007669"/>
    <property type="project" value="UniProtKB-UniRule"/>
</dbReference>
<dbReference type="GO" id="GO:0070006">
    <property type="term" value="F:metalloaminopeptidase activity"/>
    <property type="evidence" value="ECO:0007669"/>
    <property type="project" value="UniProtKB-UniRule"/>
</dbReference>
<dbReference type="GO" id="GO:0006508">
    <property type="term" value="P:proteolysis"/>
    <property type="evidence" value="ECO:0007669"/>
    <property type="project" value="UniProtKB-KW"/>
</dbReference>
<dbReference type="CDD" id="cd01088">
    <property type="entry name" value="MetAP2"/>
    <property type="match status" value="1"/>
</dbReference>
<dbReference type="Gene3D" id="3.90.230.10">
    <property type="entry name" value="Creatinase/methionine aminopeptidase superfamily"/>
    <property type="match status" value="1"/>
</dbReference>
<dbReference type="Gene3D" id="1.10.10.10">
    <property type="entry name" value="Winged helix-like DNA-binding domain superfamily/Winged helix DNA-binding domain"/>
    <property type="match status" value="1"/>
</dbReference>
<dbReference type="HAMAP" id="MF_03175">
    <property type="entry name" value="MetAP_2_euk"/>
    <property type="match status" value="1"/>
</dbReference>
<dbReference type="InterPro" id="IPR036005">
    <property type="entry name" value="Creatinase/aminopeptidase-like"/>
</dbReference>
<dbReference type="InterPro" id="IPR050247">
    <property type="entry name" value="Met_Aminopeptidase_Type2"/>
</dbReference>
<dbReference type="InterPro" id="IPR000994">
    <property type="entry name" value="Pept_M24"/>
</dbReference>
<dbReference type="InterPro" id="IPR001714">
    <property type="entry name" value="Pept_M24_MAP"/>
</dbReference>
<dbReference type="InterPro" id="IPR002468">
    <property type="entry name" value="Pept_M24A_MAP2"/>
</dbReference>
<dbReference type="InterPro" id="IPR018349">
    <property type="entry name" value="Pept_M24A_MAP2_BS"/>
</dbReference>
<dbReference type="InterPro" id="IPR036388">
    <property type="entry name" value="WH-like_DNA-bd_sf"/>
</dbReference>
<dbReference type="InterPro" id="IPR036390">
    <property type="entry name" value="WH_DNA-bd_sf"/>
</dbReference>
<dbReference type="NCBIfam" id="TIGR00501">
    <property type="entry name" value="met_pdase_II"/>
    <property type="match status" value="1"/>
</dbReference>
<dbReference type="PANTHER" id="PTHR45777">
    <property type="entry name" value="METHIONINE AMINOPEPTIDASE 2"/>
    <property type="match status" value="1"/>
</dbReference>
<dbReference type="PANTHER" id="PTHR45777:SF1">
    <property type="entry name" value="METHIONINE AMINOPEPTIDASE 2-2"/>
    <property type="match status" value="1"/>
</dbReference>
<dbReference type="Pfam" id="PF00557">
    <property type="entry name" value="Peptidase_M24"/>
    <property type="match status" value="1"/>
</dbReference>
<dbReference type="PRINTS" id="PR00599">
    <property type="entry name" value="MAPEPTIDASE"/>
</dbReference>
<dbReference type="SUPFAM" id="SSF55920">
    <property type="entry name" value="Creatinase/aminopeptidase"/>
    <property type="match status" value="1"/>
</dbReference>
<dbReference type="SUPFAM" id="SSF46785">
    <property type="entry name" value="Winged helix' DNA-binding domain"/>
    <property type="match status" value="1"/>
</dbReference>
<dbReference type="PROSITE" id="PS01202">
    <property type="entry name" value="MAP_2"/>
    <property type="match status" value="1"/>
</dbReference>
<feature type="chain" id="PRO_0000407636" description="Methionine aminopeptidase 2-2">
    <location>
        <begin position="1"/>
        <end position="464"/>
    </location>
</feature>
<feature type="region of interest" description="Disordered" evidence="2">
    <location>
        <begin position="1"/>
        <end position="106"/>
    </location>
</feature>
<feature type="compositionally biased region" description="Acidic residues" evidence="2">
    <location>
        <begin position="37"/>
        <end position="53"/>
    </location>
</feature>
<feature type="compositionally biased region" description="Basic residues" evidence="2">
    <location>
        <begin position="70"/>
        <end position="86"/>
    </location>
</feature>
<feature type="binding site" evidence="1">
    <location>
        <position position="216"/>
    </location>
    <ligand>
        <name>substrate</name>
    </ligand>
</feature>
<feature type="binding site" evidence="1">
    <location>
        <position position="237"/>
    </location>
    <ligand>
        <name>a divalent metal cation</name>
        <dbReference type="ChEBI" id="CHEBI:60240"/>
        <label>1</label>
    </ligand>
</feature>
<feature type="binding site" evidence="1">
    <location>
        <position position="248"/>
    </location>
    <ligand>
        <name>a divalent metal cation</name>
        <dbReference type="ChEBI" id="CHEBI:60240"/>
        <label>1</label>
    </ligand>
</feature>
<feature type="binding site" evidence="1">
    <location>
        <position position="248"/>
    </location>
    <ligand>
        <name>a divalent metal cation</name>
        <dbReference type="ChEBI" id="CHEBI:60240"/>
        <label>2</label>
        <note>catalytic</note>
    </ligand>
</feature>
<feature type="binding site" evidence="1">
    <location>
        <position position="317"/>
    </location>
    <ligand>
        <name>a divalent metal cation</name>
        <dbReference type="ChEBI" id="CHEBI:60240"/>
        <label>2</label>
        <note>catalytic</note>
    </ligand>
</feature>
<feature type="binding site" evidence="1">
    <location>
        <position position="325"/>
    </location>
    <ligand>
        <name>substrate</name>
    </ligand>
</feature>
<feature type="binding site" evidence="1">
    <location>
        <position position="350"/>
    </location>
    <ligand>
        <name>a divalent metal cation</name>
        <dbReference type="ChEBI" id="CHEBI:60240"/>
        <label>2</label>
        <note>catalytic</note>
    </ligand>
</feature>
<feature type="binding site" evidence="1">
    <location>
        <position position="445"/>
    </location>
    <ligand>
        <name>a divalent metal cation</name>
        <dbReference type="ChEBI" id="CHEBI:60240"/>
        <label>1</label>
    </ligand>
</feature>
<feature type="binding site" evidence="1">
    <location>
        <position position="445"/>
    </location>
    <ligand>
        <name>a divalent metal cation</name>
        <dbReference type="ChEBI" id="CHEBI:60240"/>
        <label>2</label>
        <note>catalytic</note>
    </ligand>
</feature>
<comment type="function">
    <text evidence="1">Cotranslationally removes the N-terminal methionine from nascent proteins. The N-terminal methionine is often cleaved when the second residue in the primary sequence is small and uncharged (Met-Ala-, Cys, Gly, Pro, Ser, Thr, or Val).</text>
</comment>
<comment type="catalytic activity">
    <reaction evidence="1">
        <text>Release of N-terminal amino acids, preferentially methionine, from peptides and arylamides.</text>
        <dbReference type="EC" id="3.4.11.18"/>
    </reaction>
</comment>
<comment type="cofactor">
    <cofactor evidence="1">
        <name>Co(2+)</name>
        <dbReference type="ChEBI" id="CHEBI:48828"/>
    </cofactor>
    <cofactor evidence="1">
        <name>Zn(2+)</name>
        <dbReference type="ChEBI" id="CHEBI:29105"/>
    </cofactor>
    <cofactor evidence="1">
        <name>Mn(2+)</name>
        <dbReference type="ChEBI" id="CHEBI:29035"/>
    </cofactor>
    <cofactor evidence="1">
        <name>Fe(2+)</name>
        <dbReference type="ChEBI" id="CHEBI:29033"/>
    </cofactor>
    <text evidence="1">Binds 2 divalent metal cations per subunit. Has a high-affinity and a low affinity metal-binding site. The true nature of the physiological cofactor is under debate. The enzyme is active with cobalt, zinc, manganese or divalent iron ions. Most likely, methionine aminopeptidases function as mononuclear Fe(2+)-metalloproteases under physiological conditions, and the catalytically relevant metal-binding site has been assigned to the histidine-containing high-affinity site.</text>
</comment>
<comment type="subcellular location">
    <subcellularLocation>
        <location evidence="1">Cytoplasm</location>
    </subcellularLocation>
</comment>
<comment type="similarity">
    <text evidence="1">Belongs to the peptidase M24A family. Methionine aminopeptidase eukaryotic type 2 subfamily.</text>
</comment>
<protein>
    <recommendedName>
        <fullName evidence="1">Methionine aminopeptidase 2-2</fullName>
        <shortName evidence="1">MAP 2-2</shortName>
        <shortName evidence="1">MetAP 2-2</shortName>
        <ecNumber evidence="1">3.4.11.18</ecNumber>
    </recommendedName>
    <alternativeName>
        <fullName evidence="1">Peptidase M</fullName>
    </alternativeName>
</protein>
<keyword id="KW-0031">Aminopeptidase</keyword>
<keyword id="KW-0963">Cytoplasm</keyword>
<keyword id="KW-0378">Hydrolase</keyword>
<keyword id="KW-0479">Metal-binding</keyword>
<keyword id="KW-0645">Protease</keyword>
<keyword id="KW-1185">Reference proteome</keyword>
<accession>B8M990</accession>
<sequence>MGAKTYEGGDHHEDATNVLSTKSNAVGGKPRGANMLEDGDGEFGSDDDDDGGDGQDSSLAMVNPDDAAKPKKKKRSKKKKNNKKKSGAGAQRQTSPPRVPLSQLFPDGKYPIGQMVEVQDENLRRTTDEEFRYLSRGTITDDEALNDYRKAAEVHRQVRRWIHETIQPGSSLTELAVGIEDGVRALLEHQGLEPGDSLKGGMGFPTGLALNNCAAHYTPNPGQKDIILKTDDVLKIDFGVHVNGWIVDSAFTVTFDPVYDNLVAAVKDATNTGLKCAGVDARVGEIGGFIQEAMESYEVEINGKVYPVKSIRSITGHDILRYRVHGGKQVPFVKSNDQTKMEEGEVFAIETFGSTGKGYLRDGPGVYGYSKEPHAGNVHLPLASARALLKTINQNFGTIPFCRRYLDRLGIEKYLLGMNSLISHGIVQMYPPLVDIAGSYTAQFEHTILINSSGNEIISRGDDY</sequence>
<gene>
    <name type="ORF">TSTA_112180</name>
</gene>
<evidence type="ECO:0000255" key="1">
    <source>
        <dbReference type="HAMAP-Rule" id="MF_03175"/>
    </source>
</evidence>
<evidence type="ECO:0000256" key="2">
    <source>
        <dbReference type="SAM" id="MobiDB-lite"/>
    </source>
</evidence>
<organism>
    <name type="scientific">Talaromyces stipitatus (strain ATCC 10500 / CBS 375.48 / QM 6759 / NRRL 1006)</name>
    <name type="common">Penicillium stipitatum</name>
    <dbReference type="NCBI Taxonomy" id="441959"/>
    <lineage>
        <taxon>Eukaryota</taxon>
        <taxon>Fungi</taxon>
        <taxon>Dikarya</taxon>
        <taxon>Ascomycota</taxon>
        <taxon>Pezizomycotina</taxon>
        <taxon>Eurotiomycetes</taxon>
        <taxon>Eurotiomycetidae</taxon>
        <taxon>Eurotiales</taxon>
        <taxon>Trichocomaceae</taxon>
        <taxon>Talaromyces</taxon>
        <taxon>Talaromyces sect. Talaromyces</taxon>
    </lineage>
</organism>
<reference key="1">
    <citation type="journal article" date="2015" name="Genome Announc.">
        <title>Genome sequence of the AIDS-associated pathogen Penicillium marneffei (ATCC18224) and its near taxonomic relative Talaromyces stipitatus (ATCC10500).</title>
        <authorList>
            <person name="Nierman W.C."/>
            <person name="Fedorova-Abrams N.D."/>
            <person name="Andrianopoulos A."/>
        </authorList>
    </citation>
    <scope>NUCLEOTIDE SEQUENCE [LARGE SCALE GENOMIC DNA]</scope>
    <source>
        <strain>ATCC 10500 / CBS 375.48 / QM 6759 / NRRL 1006</strain>
    </source>
</reference>